<reference key="1">
    <citation type="journal article" date="1985" name="J. Virol.">
        <title>Nucleotide sequence of avian sarcoma virus UR2 and comparison of its transforming gene with other members of the tyrosine protein kinase oncogene family.</title>
        <authorList>
            <person name="Neckameyer W.S."/>
            <person name="Wang L.-H."/>
        </authorList>
    </citation>
    <scope>NUCLEOTIDE SEQUENCE</scope>
</reference>
<protein>
    <recommendedName>
        <fullName>Tyrosine-protein kinase transforming protein ros</fullName>
        <ecNumber>2.7.10.1</ecNumber>
    </recommendedName>
</protein>
<dbReference type="EC" id="2.7.10.1"/>
<dbReference type="EMBL" id="M10455">
    <property type="status" value="NOT_ANNOTATED_CDS"/>
    <property type="molecule type" value="Unassigned_DNA"/>
</dbReference>
<dbReference type="PIR" id="A00635">
    <property type="entry name" value="TVFVUR"/>
</dbReference>
<dbReference type="SMR" id="P00529"/>
<dbReference type="BRENDA" id="2.7.10.2">
    <property type="organism ID" value="21388"/>
</dbReference>
<dbReference type="Proteomes" id="UP000143802">
    <property type="component" value="Genome"/>
</dbReference>
<dbReference type="GO" id="GO:0005886">
    <property type="term" value="C:plasma membrane"/>
    <property type="evidence" value="ECO:0007669"/>
    <property type="project" value="TreeGrafter"/>
</dbReference>
<dbReference type="GO" id="GO:0043235">
    <property type="term" value="C:receptor complex"/>
    <property type="evidence" value="ECO:0007669"/>
    <property type="project" value="TreeGrafter"/>
</dbReference>
<dbReference type="GO" id="GO:0005524">
    <property type="term" value="F:ATP binding"/>
    <property type="evidence" value="ECO:0007669"/>
    <property type="project" value="UniProtKB-KW"/>
</dbReference>
<dbReference type="GO" id="GO:0004714">
    <property type="term" value="F:transmembrane receptor protein tyrosine kinase activity"/>
    <property type="evidence" value="ECO:0007669"/>
    <property type="project" value="UniProtKB-EC"/>
</dbReference>
<dbReference type="GO" id="GO:0007169">
    <property type="term" value="P:cell surface receptor protein tyrosine kinase signaling pathway"/>
    <property type="evidence" value="ECO:0007669"/>
    <property type="project" value="InterPro"/>
</dbReference>
<dbReference type="GO" id="GO:0032006">
    <property type="term" value="P:regulation of TOR signaling"/>
    <property type="evidence" value="ECO:0007669"/>
    <property type="project" value="TreeGrafter"/>
</dbReference>
<dbReference type="CDD" id="cd05044">
    <property type="entry name" value="PTKc_c-ros"/>
    <property type="match status" value="1"/>
</dbReference>
<dbReference type="FunFam" id="1.10.510.10:FF:000341">
    <property type="entry name" value="Tyrosine-protein kinase receptor"/>
    <property type="match status" value="1"/>
</dbReference>
<dbReference type="FunFam" id="3.30.200.20:FF:000301">
    <property type="entry name" value="Tyrosine-protein kinase receptor"/>
    <property type="match status" value="1"/>
</dbReference>
<dbReference type="Gene3D" id="3.30.200.20">
    <property type="entry name" value="Phosphorylase Kinase, domain 1"/>
    <property type="match status" value="1"/>
</dbReference>
<dbReference type="Gene3D" id="1.10.510.10">
    <property type="entry name" value="Transferase(Phosphotransferase) domain 1"/>
    <property type="match status" value="1"/>
</dbReference>
<dbReference type="InterPro" id="IPR011009">
    <property type="entry name" value="Kinase-like_dom_sf"/>
</dbReference>
<dbReference type="InterPro" id="IPR000719">
    <property type="entry name" value="Prot_kinase_dom"/>
</dbReference>
<dbReference type="InterPro" id="IPR017441">
    <property type="entry name" value="Protein_kinase_ATP_BS"/>
</dbReference>
<dbReference type="InterPro" id="IPR050122">
    <property type="entry name" value="RTK"/>
</dbReference>
<dbReference type="InterPro" id="IPR001245">
    <property type="entry name" value="Ser-Thr/Tyr_kinase_cat_dom"/>
</dbReference>
<dbReference type="InterPro" id="IPR008266">
    <property type="entry name" value="Tyr_kinase_AS"/>
</dbReference>
<dbReference type="InterPro" id="IPR020635">
    <property type="entry name" value="Tyr_kinase_cat_dom"/>
</dbReference>
<dbReference type="InterPro" id="IPR002011">
    <property type="entry name" value="Tyr_kinase_rcpt_2_CS"/>
</dbReference>
<dbReference type="PANTHER" id="PTHR24416:SF527">
    <property type="entry name" value="PROTO-ONCOGENE TYROSINE-PROTEIN KINASE ROS"/>
    <property type="match status" value="1"/>
</dbReference>
<dbReference type="PANTHER" id="PTHR24416">
    <property type="entry name" value="TYROSINE-PROTEIN KINASE RECEPTOR"/>
    <property type="match status" value="1"/>
</dbReference>
<dbReference type="Pfam" id="PF07714">
    <property type="entry name" value="PK_Tyr_Ser-Thr"/>
    <property type="match status" value="1"/>
</dbReference>
<dbReference type="PRINTS" id="PR00109">
    <property type="entry name" value="TYRKINASE"/>
</dbReference>
<dbReference type="SMART" id="SM00219">
    <property type="entry name" value="TyrKc"/>
    <property type="match status" value="1"/>
</dbReference>
<dbReference type="SUPFAM" id="SSF56112">
    <property type="entry name" value="Protein kinase-like (PK-like)"/>
    <property type="match status" value="1"/>
</dbReference>
<dbReference type="PROSITE" id="PS00107">
    <property type="entry name" value="PROTEIN_KINASE_ATP"/>
    <property type="match status" value="1"/>
</dbReference>
<dbReference type="PROSITE" id="PS50011">
    <property type="entry name" value="PROTEIN_KINASE_DOM"/>
    <property type="match status" value="1"/>
</dbReference>
<dbReference type="PROSITE" id="PS00109">
    <property type="entry name" value="PROTEIN_KINASE_TYR"/>
    <property type="match status" value="1"/>
</dbReference>
<dbReference type="PROSITE" id="PS00239">
    <property type="entry name" value="RECEPTOR_TYR_KIN_II"/>
    <property type="match status" value="1"/>
</dbReference>
<keyword id="KW-0067">ATP-binding</keyword>
<keyword id="KW-0418">Kinase</keyword>
<keyword id="KW-0547">Nucleotide-binding</keyword>
<keyword id="KW-0553">Oncogene</keyword>
<keyword id="KW-0597">Phosphoprotein</keyword>
<keyword id="KW-0808">Transferase</keyword>
<keyword id="KW-0829">Tyrosine-protein kinase</keyword>
<sequence length="402" mass="45073">DTVTSPDITAIVAVIGAVVLGLTSLTIIILFGFVWHQRWKSRKPASTGQIVLVKEDKELAQLRGMAETVGLANACYAVSTLPSQAEIESLPAFPRDKLNLHKLLGSGAFGEVYEGTALDILADGSGESRVAVKTLKRGATDQEKSEFLKEAHLMSKFDHPHILKLLGVCLLNEPQYLILELMEGGDLLSYLRGARKQKFQSPLLTLTDLLDICLDICKGCVYLEKMRFIHRDLAARNCLVSEKQYGSCSRVVKIGDFGLARDIYKNDYYRKRGEGLLPVRWMAPESLIDGVFTNHSDVWAFGVLVWETLTLGQQPYPGLSNIEVLHHVRSGGRLESPNNCPDDIRDLMTRCWAQDPHNRPTFFYIQHKLQEIRHSPLCFSYFLGDKESVAPLRIQTAFFQPL</sequence>
<accession>P00529</accession>
<organismHost>
    <name type="scientific">Galliformes</name>
    <dbReference type="NCBI Taxonomy" id="8976"/>
</organismHost>
<proteinExistence type="inferred from homology"/>
<name>ROS_AVISU</name>
<organism>
    <name type="scientific">UR2 avian sarcoma virus</name>
    <name type="common">UR2SV</name>
    <name type="synonym">Avian sarcoma virus (strain UR2)</name>
    <dbReference type="NCBI Taxonomy" id="354090"/>
    <lineage>
        <taxon>Viruses</taxon>
        <taxon>Riboviria</taxon>
        <taxon>Pararnavirae</taxon>
        <taxon>Artverviricota</taxon>
        <taxon>Revtraviricetes</taxon>
        <taxon>Ortervirales</taxon>
        <taxon>Retroviridae</taxon>
        <taxon>Orthoretrovirinae</taxon>
        <taxon>Alpharetrovirus</taxon>
    </lineage>
</organism>
<feature type="chain" id="PRO_0000058927" description="Tyrosine-protein kinase transforming protein ros">
    <location>
        <begin position="1"/>
        <end position="402"/>
    </location>
</feature>
<feature type="domain" description="Protein kinase" evidence="2">
    <location>
        <begin position="98"/>
        <end position="377"/>
    </location>
</feature>
<feature type="active site" description="Proton acceptor" evidence="2 3">
    <location>
        <position position="232"/>
    </location>
</feature>
<feature type="binding site" evidence="2">
    <location>
        <begin position="104"/>
        <end position="112"/>
    </location>
    <ligand>
        <name>ATP</name>
        <dbReference type="ChEBI" id="CHEBI:30616"/>
    </ligand>
</feature>
<feature type="binding site" evidence="2">
    <location>
        <position position="133"/>
    </location>
    <ligand>
        <name>ATP</name>
        <dbReference type="ChEBI" id="CHEBI:30616"/>
    </ligand>
</feature>
<feature type="modified residue" description="Phosphotyrosine; by autocatalysis" evidence="1">
    <location>
        <position position="268"/>
    </location>
</feature>
<comment type="catalytic activity">
    <reaction evidence="3">
        <text>L-tyrosyl-[protein] + ATP = O-phospho-L-tyrosyl-[protein] + ADP + H(+)</text>
        <dbReference type="Rhea" id="RHEA:10596"/>
        <dbReference type="Rhea" id="RHEA-COMP:10136"/>
        <dbReference type="Rhea" id="RHEA-COMP:20101"/>
        <dbReference type="ChEBI" id="CHEBI:15378"/>
        <dbReference type="ChEBI" id="CHEBI:30616"/>
        <dbReference type="ChEBI" id="CHEBI:46858"/>
        <dbReference type="ChEBI" id="CHEBI:61978"/>
        <dbReference type="ChEBI" id="CHEBI:456216"/>
        <dbReference type="EC" id="2.7.10.1"/>
    </reaction>
</comment>
<comment type="miscellaneous">
    <text>This protein is synthesized as a Gag-Ros polyprotein.</text>
</comment>
<comment type="similarity">
    <text evidence="2">Belongs to the protein kinase superfamily. Tyr protein kinase family. Insulin receptor subfamily.</text>
</comment>
<gene>
    <name type="primary">V-ROS</name>
</gene>
<evidence type="ECO:0000250" key="1"/>
<evidence type="ECO:0000255" key="2">
    <source>
        <dbReference type="PROSITE-ProRule" id="PRU00159"/>
    </source>
</evidence>
<evidence type="ECO:0000255" key="3">
    <source>
        <dbReference type="PROSITE-ProRule" id="PRU10028"/>
    </source>
</evidence>